<keyword id="KW-0413">Isomerase</keyword>
<keyword id="KW-0460">Magnesium</keyword>
<keyword id="KW-0479">Metal-binding</keyword>
<keyword id="KW-0597">Phosphoprotein</keyword>
<keyword id="KW-1185">Reference proteome</keyword>
<organism>
    <name type="scientific">Legionella pneumophila subsp. pneumophila (strain Philadelphia 1 / ATCC 33152 / DSM 7513)</name>
    <dbReference type="NCBI Taxonomy" id="272624"/>
    <lineage>
        <taxon>Bacteria</taxon>
        <taxon>Pseudomonadati</taxon>
        <taxon>Pseudomonadota</taxon>
        <taxon>Gammaproteobacteria</taxon>
        <taxon>Legionellales</taxon>
        <taxon>Legionellaceae</taxon>
        <taxon>Legionella</taxon>
    </lineage>
</organism>
<proteinExistence type="inferred from homology"/>
<name>GLMM_LEGPH</name>
<comment type="function">
    <text evidence="1">Catalyzes the conversion of glucosamine-6-phosphate to glucosamine-1-phosphate.</text>
</comment>
<comment type="catalytic activity">
    <reaction evidence="1">
        <text>alpha-D-glucosamine 1-phosphate = D-glucosamine 6-phosphate</text>
        <dbReference type="Rhea" id="RHEA:23424"/>
        <dbReference type="ChEBI" id="CHEBI:58516"/>
        <dbReference type="ChEBI" id="CHEBI:58725"/>
        <dbReference type="EC" id="5.4.2.10"/>
    </reaction>
</comment>
<comment type="cofactor">
    <cofactor evidence="1">
        <name>Mg(2+)</name>
        <dbReference type="ChEBI" id="CHEBI:18420"/>
    </cofactor>
    <text evidence="1">Binds 1 Mg(2+) ion per subunit.</text>
</comment>
<comment type="PTM">
    <text evidence="1">Activated by phosphorylation.</text>
</comment>
<comment type="similarity">
    <text evidence="1">Belongs to the phosphohexose mutase family.</text>
</comment>
<protein>
    <recommendedName>
        <fullName evidence="1">Phosphoglucosamine mutase</fullName>
        <ecNumber evidence="1">5.4.2.10</ecNumber>
    </recommendedName>
</protein>
<reference key="1">
    <citation type="journal article" date="2004" name="Science">
        <title>The genomic sequence of the accidental pathogen Legionella pneumophila.</title>
        <authorList>
            <person name="Chien M."/>
            <person name="Morozova I."/>
            <person name="Shi S."/>
            <person name="Sheng H."/>
            <person name="Chen J."/>
            <person name="Gomez S.M."/>
            <person name="Asamani G."/>
            <person name="Hill K."/>
            <person name="Nuara J."/>
            <person name="Feder M."/>
            <person name="Rineer J."/>
            <person name="Greenberg J.J."/>
            <person name="Steshenko V."/>
            <person name="Park S.H."/>
            <person name="Zhao B."/>
            <person name="Teplitskaya E."/>
            <person name="Edwards J.R."/>
            <person name="Pampou S."/>
            <person name="Georghiou A."/>
            <person name="Chou I.-C."/>
            <person name="Iannuccilli W."/>
            <person name="Ulz M.E."/>
            <person name="Kim D.H."/>
            <person name="Geringer-Sameth A."/>
            <person name="Goldsberry C."/>
            <person name="Morozov P."/>
            <person name="Fischer S.G."/>
            <person name="Segal G."/>
            <person name="Qu X."/>
            <person name="Rzhetsky A."/>
            <person name="Zhang P."/>
            <person name="Cayanis E."/>
            <person name="De Jong P.J."/>
            <person name="Ju J."/>
            <person name="Kalachikov S."/>
            <person name="Shuman H.A."/>
            <person name="Russo J.J."/>
        </authorList>
    </citation>
    <scope>NUCLEOTIDE SEQUENCE [LARGE SCALE GENOMIC DNA]</scope>
    <source>
        <strain>Philadelphia 1 / ATCC 33152 / DSM 7513</strain>
    </source>
</reference>
<accession>Q5ZRT4</accession>
<dbReference type="EC" id="5.4.2.10" evidence="1"/>
<dbReference type="EMBL" id="AE017354">
    <property type="protein sequence ID" value="AAU28843.1"/>
    <property type="molecule type" value="Genomic_DNA"/>
</dbReference>
<dbReference type="RefSeq" id="WP_010948482.1">
    <property type="nucleotide sequence ID" value="NC_002942.5"/>
</dbReference>
<dbReference type="RefSeq" id="YP_096790.1">
    <property type="nucleotide sequence ID" value="NC_002942.5"/>
</dbReference>
<dbReference type="SMR" id="Q5ZRT4"/>
<dbReference type="STRING" id="272624.lpg2794"/>
<dbReference type="PaxDb" id="272624-lpg2794"/>
<dbReference type="DNASU" id="3079807"/>
<dbReference type="GeneID" id="57036792"/>
<dbReference type="KEGG" id="lpn:lpg2794"/>
<dbReference type="PATRIC" id="fig|272624.6.peg.2975"/>
<dbReference type="eggNOG" id="COG1109">
    <property type="taxonomic scope" value="Bacteria"/>
</dbReference>
<dbReference type="HOGENOM" id="CLU_016950_7_0_6"/>
<dbReference type="OrthoDB" id="9803322at2"/>
<dbReference type="Proteomes" id="UP000000609">
    <property type="component" value="Chromosome"/>
</dbReference>
<dbReference type="GO" id="GO:0005829">
    <property type="term" value="C:cytosol"/>
    <property type="evidence" value="ECO:0007669"/>
    <property type="project" value="TreeGrafter"/>
</dbReference>
<dbReference type="GO" id="GO:0000287">
    <property type="term" value="F:magnesium ion binding"/>
    <property type="evidence" value="ECO:0007669"/>
    <property type="project" value="UniProtKB-UniRule"/>
</dbReference>
<dbReference type="GO" id="GO:0008966">
    <property type="term" value="F:phosphoglucosamine mutase activity"/>
    <property type="evidence" value="ECO:0007669"/>
    <property type="project" value="UniProtKB-UniRule"/>
</dbReference>
<dbReference type="GO" id="GO:0004615">
    <property type="term" value="F:phosphomannomutase activity"/>
    <property type="evidence" value="ECO:0007669"/>
    <property type="project" value="TreeGrafter"/>
</dbReference>
<dbReference type="GO" id="GO:0005975">
    <property type="term" value="P:carbohydrate metabolic process"/>
    <property type="evidence" value="ECO:0007669"/>
    <property type="project" value="InterPro"/>
</dbReference>
<dbReference type="GO" id="GO:0009252">
    <property type="term" value="P:peptidoglycan biosynthetic process"/>
    <property type="evidence" value="ECO:0007669"/>
    <property type="project" value="TreeGrafter"/>
</dbReference>
<dbReference type="GO" id="GO:0006048">
    <property type="term" value="P:UDP-N-acetylglucosamine biosynthetic process"/>
    <property type="evidence" value="ECO:0007669"/>
    <property type="project" value="TreeGrafter"/>
</dbReference>
<dbReference type="CDD" id="cd05802">
    <property type="entry name" value="GlmM"/>
    <property type="match status" value="1"/>
</dbReference>
<dbReference type="FunFam" id="3.30.310.50:FF:000001">
    <property type="entry name" value="Phosphoglucosamine mutase"/>
    <property type="match status" value="1"/>
</dbReference>
<dbReference type="FunFam" id="3.40.120.10:FF:000001">
    <property type="entry name" value="Phosphoglucosamine mutase"/>
    <property type="match status" value="1"/>
</dbReference>
<dbReference type="FunFam" id="3.40.120.10:FF:000002">
    <property type="entry name" value="Phosphoglucosamine mutase"/>
    <property type="match status" value="1"/>
</dbReference>
<dbReference type="Gene3D" id="3.40.120.10">
    <property type="entry name" value="Alpha-D-Glucose-1,6-Bisphosphate, subunit A, domain 3"/>
    <property type="match status" value="3"/>
</dbReference>
<dbReference type="Gene3D" id="3.30.310.50">
    <property type="entry name" value="Alpha-D-phosphohexomutase, C-terminal domain"/>
    <property type="match status" value="1"/>
</dbReference>
<dbReference type="HAMAP" id="MF_01554_B">
    <property type="entry name" value="GlmM_B"/>
    <property type="match status" value="1"/>
</dbReference>
<dbReference type="InterPro" id="IPR005844">
    <property type="entry name" value="A-D-PHexomutase_a/b/a-I"/>
</dbReference>
<dbReference type="InterPro" id="IPR016055">
    <property type="entry name" value="A-D-PHexomutase_a/b/a-I/II/III"/>
</dbReference>
<dbReference type="InterPro" id="IPR005845">
    <property type="entry name" value="A-D-PHexomutase_a/b/a-II"/>
</dbReference>
<dbReference type="InterPro" id="IPR005846">
    <property type="entry name" value="A-D-PHexomutase_a/b/a-III"/>
</dbReference>
<dbReference type="InterPro" id="IPR005843">
    <property type="entry name" value="A-D-PHexomutase_C"/>
</dbReference>
<dbReference type="InterPro" id="IPR036900">
    <property type="entry name" value="A-D-PHexomutase_C_sf"/>
</dbReference>
<dbReference type="InterPro" id="IPR005841">
    <property type="entry name" value="Alpha-D-phosphohexomutase_SF"/>
</dbReference>
<dbReference type="InterPro" id="IPR006352">
    <property type="entry name" value="GlmM_bact"/>
</dbReference>
<dbReference type="InterPro" id="IPR050060">
    <property type="entry name" value="Phosphoglucosamine_mutase"/>
</dbReference>
<dbReference type="NCBIfam" id="TIGR01455">
    <property type="entry name" value="glmM"/>
    <property type="match status" value="1"/>
</dbReference>
<dbReference type="NCBIfam" id="NF008139">
    <property type="entry name" value="PRK10887.1"/>
    <property type="match status" value="1"/>
</dbReference>
<dbReference type="PANTHER" id="PTHR42946:SF1">
    <property type="entry name" value="PHOSPHOGLUCOMUTASE (ALPHA-D-GLUCOSE-1,6-BISPHOSPHATE-DEPENDENT)"/>
    <property type="match status" value="1"/>
</dbReference>
<dbReference type="PANTHER" id="PTHR42946">
    <property type="entry name" value="PHOSPHOHEXOSE MUTASE"/>
    <property type="match status" value="1"/>
</dbReference>
<dbReference type="Pfam" id="PF02878">
    <property type="entry name" value="PGM_PMM_I"/>
    <property type="match status" value="1"/>
</dbReference>
<dbReference type="Pfam" id="PF02879">
    <property type="entry name" value="PGM_PMM_II"/>
    <property type="match status" value="1"/>
</dbReference>
<dbReference type="Pfam" id="PF02880">
    <property type="entry name" value="PGM_PMM_III"/>
    <property type="match status" value="1"/>
</dbReference>
<dbReference type="Pfam" id="PF00408">
    <property type="entry name" value="PGM_PMM_IV"/>
    <property type="match status" value="1"/>
</dbReference>
<dbReference type="PRINTS" id="PR00509">
    <property type="entry name" value="PGMPMM"/>
</dbReference>
<dbReference type="SUPFAM" id="SSF55957">
    <property type="entry name" value="Phosphoglucomutase, C-terminal domain"/>
    <property type="match status" value="1"/>
</dbReference>
<dbReference type="SUPFAM" id="SSF53738">
    <property type="entry name" value="Phosphoglucomutase, first 3 domains"/>
    <property type="match status" value="3"/>
</dbReference>
<sequence length="455" mass="48344">MSQRKYFGTDGIRGHVGLSNINPEFVLKLGWAVGCVLANGARKKVVIGKDTRVSGYMLESALEAGLSAAGVDVALLGPMPTPGIAYLTQTLRANAGIVISASHNLFEDNGIKFFSADGGKLPDSVELAIEAQLEKQLQTVPSAKLGKATRINDAAGRYIEFCKSTIPSLSRLSNLKIVVDCANGATYHIAPNVFSELGADVVPIGIKPDGFNINQECGSTAPELLREKVIAVGADIGIGLDGDGDRVILVDSLGNLVDGDQIIYIIAKDRHQRGVLHGGVVGTLMSNYGLELAITSLGVPFQRSKVGDRYVLETLREKDWKIGGETSGHIVCLDKTTTGDGIVAALQVLSIMVKQNKALHELTAGIQLLPQTLVNLKTNNAALLASNPDVIQAVKNLEKHLNGEGRVLLRPSGTEPLLRVMVEGANASIVKQQAQMLCDDISQIDKKMTESLPST</sequence>
<feature type="chain" id="PRO_0000147908" description="Phosphoglucosamine mutase">
    <location>
        <begin position="1"/>
        <end position="455"/>
    </location>
</feature>
<feature type="active site" description="Phosphoserine intermediate" evidence="1">
    <location>
        <position position="102"/>
    </location>
</feature>
<feature type="binding site" description="via phosphate group" evidence="1">
    <location>
        <position position="102"/>
    </location>
    <ligand>
        <name>Mg(2+)</name>
        <dbReference type="ChEBI" id="CHEBI:18420"/>
    </ligand>
</feature>
<feature type="binding site" evidence="1">
    <location>
        <position position="241"/>
    </location>
    <ligand>
        <name>Mg(2+)</name>
        <dbReference type="ChEBI" id="CHEBI:18420"/>
    </ligand>
</feature>
<feature type="binding site" evidence="1">
    <location>
        <position position="243"/>
    </location>
    <ligand>
        <name>Mg(2+)</name>
        <dbReference type="ChEBI" id="CHEBI:18420"/>
    </ligand>
</feature>
<feature type="binding site" evidence="1">
    <location>
        <position position="245"/>
    </location>
    <ligand>
        <name>Mg(2+)</name>
        <dbReference type="ChEBI" id="CHEBI:18420"/>
    </ligand>
</feature>
<feature type="modified residue" description="Phosphoserine" evidence="1">
    <location>
        <position position="102"/>
    </location>
</feature>
<evidence type="ECO:0000255" key="1">
    <source>
        <dbReference type="HAMAP-Rule" id="MF_01554"/>
    </source>
</evidence>
<gene>
    <name evidence="1" type="primary">glmM</name>
    <name type="ordered locus">lpg2794</name>
</gene>